<gene>
    <name type="primary">Hpd</name>
</gene>
<organism>
    <name type="scientific">Rattus norvegicus</name>
    <name type="common">Rat</name>
    <dbReference type="NCBI Taxonomy" id="10116"/>
    <lineage>
        <taxon>Eukaryota</taxon>
        <taxon>Metazoa</taxon>
        <taxon>Chordata</taxon>
        <taxon>Craniata</taxon>
        <taxon>Vertebrata</taxon>
        <taxon>Euteleostomi</taxon>
        <taxon>Mammalia</taxon>
        <taxon>Eutheria</taxon>
        <taxon>Euarchontoglires</taxon>
        <taxon>Glires</taxon>
        <taxon>Rodentia</taxon>
        <taxon>Myomorpha</taxon>
        <taxon>Muroidea</taxon>
        <taxon>Muridae</taxon>
        <taxon>Murinae</taxon>
        <taxon>Rattus</taxon>
    </lineage>
</organism>
<sequence length="393" mass="45112">MTTYSNKGPKPERGRFLHFHSVTFWVGNAKQAASFYCNKMGFEPLAYKGLETGSREVVSHVIKQGKIVFVLCSALNPWNKEMGDHLVKHGDGVKDIAFEVEDCEHIVQKARERGAKIVREPWVEEDKFGKVKFAVLQTYGDTTHTLVEKINYTGRFLPGFEAPTYKDTLLPKLPSCNLEIIDHIVGNQPDQEMESASEWYLKNLQFHRFWSVDDTQVHTEYSSLRSIVVANYEESIKMPINEPAPGRKKSQIQEYVDYNGGAGVQHIALRTEDIITTIRHLRERGMEFLAVPSSYYRLLRENLKTSKIQVKENMDVLEELKILVDYDEKGYLLQIFTKPMQDRPTLFLEVIQRHNHQGFGAGNFNSLFKAFEEEQALRGNLTDLETNGVRSGM</sequence>
<dbReference type="EC" id="1.13.11.27" evidence="5 6"/>
<dbReference type="EMBL" id="AF082834">
    <property type="protein sequence ID" value="AAC32387.1"/>
    <property type="molecule type" value="mRNA"/>
</dbReference>
<dbReference type="EMBL" id="BC081819">
    <property type="protein sequence ID" value="AAH81819.1"/>
    <property type="molecule type" value="mRNA"/>
</dbReference>
<dbReference type="EMBL" id="M18405">
    <property type="protein sequence ID" value="AAA40740.1"/>
    <property type="status" value="ALT_FRAME"/>
    <property type="molecule type" value="mRNA"/>
</dbReference>
<dbReference type="PIR" id="S32820">
    <property type="entry name" value="S32820"/>
</dbReference>
<dbReference type="PIR" id="S74178">
    <property type="entry name" value="S74178"/>
</dbReference>
<dbReference type="RefSeq" id="NP_058929.1">
    <property type="nucleotide sequence ID" value="NM_017233.2"/>
</dbReference>
<dbReference type="PDB" id="1SQI">
    <property type="method" value="X-ray"/>
    <property type="resolution" value="2.15 A"/>
    <property type="chains" value="A/B=1-393"/>
</dbReference>
<dbReference type="PDBsum" id="1SQI"/>
<dbReference type="SMR" id="P32755"/>
<dbReference type="FunCoup" id="P32755">
    <property type="interactions" value="176"/>
</dbReference>
<dbReference type="STRING" id="10116.ENSRNOP00000001809"/>
<dbReference type="BindingDB" id="P32755"/>
<dbReference type="ChEMBL" id="CHEMBL5863"/>
<dbReference type="DrugCentral" id="P32755"/>
<dbReference type="iPTMnet" id="P32755"/>
<dbReference type="PhosphoSitePlus" id="P32755"/>
<dbReference type="PaxDb" id="10116-ENSRNOP00000001809"/>
<dbReference type="Ensembl" id="ENSRNOT00000120179.1">
    <property type="protein sequence ID" value="ENSRNOP00000085869.1"/>
    <property type="gene ID" value="ENSRNOG00000001338.7"/>
</dbReference>
<dbReference type="GeneID" id="29531"/>
<dbReference type="KEGG" id="rno:29531"/>
<dbReference type="UCSC" id="RGD:61974">
    <property type="organism name" value="rat"/>
</dbReference>
<dbReference type="AGR" id="RGD:61974"/>
<dbReference type="CTD" id="3242"/>
<dbReference type="RGD" id="61974">
    <property type="gene designation" value="Hpd"/>
</dbReference>
<dbReference type="eggNOG" id="KOG0638">
    <property type="taxonomic scope" value="Eukaryota"/>
</dbReference>
<dbReference type="GeneTree" id="ENSGT00530000063474"/>
<dbReference type="HOGENOM" id="CLU_034004_3_1_1"/>
<dbReference type="InParanoid" id="P32755"/>
<dbReference type="OMA" id="DPFPVKG"/>
<dbReference type="OrthoDB" id="414569at2759"/>
<dbReference type="PhylomeDB" id="P32755"/>
<dbReference type="BRENDA" id="1.13.11.27">
    <property type="organism ID" value="5301"/>
</dbReference>
<dbReference type="Reactome" id="R-RNO-8963684">
    <property type="pathway name" value="Tyrosine catabolism"/>
</dbReference>
<dbReference type="SABIO-RK" id="P32755"/>
<dbReference type="UniPathway" id="UPA00139">
    <property type="reaction ID" value="UER00362"/>
</dbReference>
<dbReference type="EvolutionaryTrace" id="P32755"/>
<dbReference type="PRO" id="PR:P32755"/>
<dbReference type="Proteomes" id="UP000002494">
    <property type="component" value="Chromosome 12"/>
</dbReference>
<dbReference type="Bgee" id="ENSRNOG00000001338">
    <property type="expression patterns" value="Expressed in liver and 18 other cell types or tissues"/>
</dbReference>
<dbReference type="GO" id="GO:0005783">
    <property type="term" value="C:endoplasmic reticulum"/>
    <property type="evidence" value="ECO:0000314"/>
    <property type="project" value="MGI"/>
</dbReference>
<dbReference type="GO" id="GO:0005789">
    <property type="term" value="C:endoplasmic reticulum membrane"/>
    <property type="evidence" value="ECO:0000314"/>
    <property type="project" value="RGD"/>
</dbReference>
<dbReference type="GO" id="GO:0005794">
    <property type="term" value="C:Golgi apparatus"/>
    <property type="evidence" value="ECO:0000314"/>
    <property type="project" value="MGI"/>
</dbReference>
<dbReference type="GO" id="GO:0000139">
    <property type="term" value="C:Golgi membrane"/>
    <property type="evidence" value="ECO:0000314"/>
    <property type="project" value="RGD"/>
</dbReference>
<dbReference type="GO" id="GO:0003868">
    <property type="term" value="F:4-hydroxyphenylpyruvate dioxygenase activity"/>
    <property type="evidence" value="ECO:0000314"/>
    <property type="project" value="UniProtKB"/>
</dbReference>
<dbReference type="GO" id="GO:0005506">
    <property type="term" value="F:iron ion binding"/>
    <property type="evidence" value="ECO:0000314"/>
    <property type="project" value="UniProtKB"/>
</dbReference>
<dbReference type="GO" id="GO:0042803">
    <property type="term" value="F:protein homodimerization activity"/>
    <property type="evidence" value="ECO:0000314"/>
    <property type="project" value="UniProtKB"/>
</dbReference>
<dbReference type="GO" id="GO:0006559">
    <property type="term" value="P:L-phenylalanine catabolic process"/>
    <property type="evidence" value="ECO:0007669"/>
    <property type="project" value="UniProtKB-UniPathway"/>
</dbReference>
<dbReference type="GO" id="GO:0006572">
    <property type="term" value="P:tyrosine catabolic process"/>
    <property type="evidence" value="ECO:0000314"/>
    <property type="project" value="UniProtKB"/>
</dbReference>
<dbReference type="CDD" id="cd07250">
    <property type="entry name" value="HPPD_C_like"/>
    <property type="match status" value="1"/>
</dbReference>
<dbReference type="CDD" id="cd08342">
    <property type="entry name" value="HPPD_N_like"/>
    <property type="match status" value="1"/>
</dbReference>
<dbReference type="FunFam" id="3.10.180.10:FF:000008">
    <property type="entry name" value="4-hydroxyphenylpyruvate dioxygenase"/>
    <property type="match status" value="1"/>
</dbReference>
<dbReference type="FunFam" id="3.10.180.10:FF:000022">
    <property type="entry name" value="4-hydroxyphenylpyruvate dioxygenase"/>
    <property type="match status" value="1"/>
</dbReference>
<dbReference type="Gene3D" id="3.10.180.10">
    <property type="entry name" value="2,3-Dihydroxybiphenyl 1,2-Dioxygenase, domain 1"/>
    <property type="match status" value="2"/>
</dbReference>
<dbReference type="InterPro" id="IPR005956">
    <property type="entry name" value="4OHPhenylPyrv_dOase"/>
</dbReference>
<dbReference type="InterPro" id="IPR041735">
    <property type="entry name" value="4OHPhenylPyrv_dOase_C"/>
</dbReference>
<dbReference type="InterPro" id="IPR041736">
    <property type="entry name" value="4OHPhenylPyrv_dOase_N"/>
</dbReference>
<dbReference type="InterPro" id="IPR029068">
    <property type="entry name" value="Glyas_Bleomycin-R_OHBP_Dase"/>
</dbReference>
<dbReference type="InterPro" id="IPR004360">
    <property type="entry name" value="Glyas_Fos-R_dOase_dom"/>
</dbReference>
<dbReference type="InterPro" id="IPR037523">
    <property type="entry name" value="VOC"/>
</dbReference>
<dbReference type="NCBIfam" id="TIGR01263">
    <property type="entry name" value="4HPPD"/>
    <property type="match status" value="1"/>
</dbReference>
<dbReference type="PANTHER" id="PTHR11959">
    <property type="entry name" value="4-HYDROXYPHENYLPYRUVATE DIOXYGENASE"/>
    <property type="match status" value="1"/>
</dbReference>
<dbReference type="PANTHER" id="PTHR11959:SF12">
    <property type="entry name" value="4-HYDROXYPHENYLPYRUVATE DIOXYGENASE"/>
    <property type="match status" value="1"/>
</dbReference>
<dbReference type="Pfam" id="PF00903">
    <property type="entry name" value="Glyoxalase"/>
    <property type="match status" value="2"/>
</dbReference>
<dbReference type="PIRSF" id="PIRSF009283">
    <property type="entry name" value="HPP_dOase"/>
    <property type="match status" value="1"/>
</dbReference>
<dbReference type="SUPFAM" id="SSF54593">
    <property type="entry name" value="Glyoxalase/Bleomycin resistance protein/Dihydroxybiphenyl dioxygenase"/>
    <property type="match status" value="1"/>
</dbReference>
<dbReference type="PROSITE" id="PS51819">
    <property type="entry name" value="VOC"/>
    <property type="match status" value="2"/>
</dbReference>
<name>HPPD_RAT</name>
<reference key="1">
    <citation type="journal article" date="1996" name="FEBS Lett.">
        <title>The C-terminal of rat 4-hydroxyphenylpyruvate dioxygenase is indispensable for enzyme activity.</title>
        <authorList>
            <person name="Lee M.H."/>
            <person name="Zhang Z.H."/>
            <person name="MacKinnon C.H."/>
            <person name="Baldwin J.E."/>
            <person name="Crouch N.P."/>
        </authorList>
    </citation>
    <scope>NUCLEOTIDE SEQUENCE [MRNA]</scope>
    <scope>CATALYTIC ACTIVITY</scope>
    <scope>FUNCTION</scope>
</reference>
<reference key="2">
    <citation type="journal article" date="2003" name="Cell Biol. Int.">
        <title>Tissue distribution, intracellular localization and proteolytic processing of rat 4-hydroxyphenylpyruvate dioxygenase.</title>
        <authorList>
            <person name="Neve S."/>
            <person name="Aarenstrup L."/>
            <person name="Tornehave D."/>
            <person name="Rahbek-Nielsen H."/>
            <person name="Corydon T.J."/>
            <person name="Roepstorff P."/>
            <person name="Kristiansen K."/>
        </authorList>
    </citation>
    <scope>NUCLEOTIDE SEQUENCE [MRNA]</scope>
    <scope>ACETYLATION AT THR-2</scope>
    <scope>SUBCELLULAR LOCATION</scope>
</reference>
<reference key="3">
    <citation type="journal article" date="2004" name="Genome Res.">
        <title>The status, quality, and expansion of the NIH full-length cDNA project: the Mammalian Gene Collection (MGC).</title>
        <authorList>
            <consortium name="The MGC Project Team"/>
        </authorList>
    </citation>
    <scope>NUCLEOTIDE SEQUENCE [LARGE SCALE MRNA]</scope>
    <source>
        <tissue>Kidney</tissue>
    </source>
</reference>
<reference key="4">
    <citation type="journal article" date="1987" name="J. Immunol.">
        <title>Molecular cloning of the liver-specific rat F antigen.</title>
        <authorList>
            <person name="Gershwin M.E."/>
            <person name="Coppel R.L."/>
            <person name="Bearer E."/>
            <person name="Peterson M.G."/>
            <person name="Sturgess A."/>
            <person name="McKay I.R."/>
        </authorList>
    </citation>
    <scope>NUCLEOTIDE SEQUENCE [MRNA] OF 4-393</scope>
</reference>
<reference key="5">
    <citation type="journal article" date="2012" name="Nat. Commun.">
        <title>Quantitative maps of protein phosphorylation sites across 14 different rat organs and tissues.</title>
        <authorList>
            <person name="Lundby A."/>
            <person name="Secher A."/>
            <person name="Lage K."/>
            <person name="Nordsborg N.B."/>
            <person name="Dmytriyev A."/>
            <person name="Lundby C."/>
            <person name="Olsen J.V."/>
        </authorList>
    </citation>
    <scope>PHOSPHORYLATION [LARGE SCALE ANALYSIS] AT SER-250</scope>
    <scope>IDENTIFICATION BY MASS SPECTROMETRY [LARGE SCALE ANALYSIS]</scope>
</reference>
<reference key="6">
    <citation type="journal article" date="2004" name="Biochemistry">
        <title>Structural basis for herbicidal inhibitor selectivity revealed by comparison of crystal structures of plant and mammalian 4-hydroxyphenylpyruvate dioxygenases.</title>
        <authorList>
            <person name="Yang C."/>
            <person name="Pflugrath J.W."/>
            <person name="Camper D.L."/>
            <person name="Foster M.L."/>
            <person name="Pernich D.J."/>
            <person name="Walsh T.A."/>
        </authorList>
    </citation>
    <scope>X-RAY CRYSTALLOGRAPHY (2.15 ANGSTROMS) IN COMPLEX WITH INHIBITOR DAS869</scope>
    <scope>BIOPHYSICOCHEMICAL PROPERTIES</scope>
    <scope>METAL-BINDING SITES</scope>
    <scope>SUBUNIT</scope>
    <scope>FUNCTION</scope>
    <scope>CATALYTIC ACTIVITY</scope>
    <scope>COFACTOR</scope>
</reference>
<proteinExistence type="evidence at protein level"/>
<comment type="function">
    <text evidence="5 6">Catalyzes the conversion of 4-hydroxyphenylpyruvic acid to homogentisic acid, one of the steps in tyrosine catabolism.</text>
</comment>
<comment type="catalytic activity">
    <reaction evidence="5 6">
        <text>3-(4-hydroxyphenyl)pyruvate + O2 = homogentisate + CO2</text>
        <dbReference type="Rhea" id="RHEA:16189"/>
        <dbReference type="ChEBI" id="CHEBI:15379"/>
        <dbReference type="ChEBI" id="CHEBI:16169"/>
        <dbReference type="ChEBI" id="CHEBI:16526"/>
        <dbReference type="ChEBI" id="CHEBI:36242"/>
        <dbReference type="EC" id="1.13.11.27"/>
    </reaction>
    <physiologicalReaction direction="left-to-right" evidence="8">
        <dbReference type="Rhea" id="RHEA:16190"/>
    </physiologicalReaction>
</comment>
<comment type="cofactor">
    <cofactor evidence="5">
        <name>Fe cation</name>
        <dbReference type="ChEBI" id="CHEBI:24875"/>
    </cofactor>
    <text evidence="5">Binds 1 Fe cation per subunit.</text>
</comment>
<comment type="biophysicochemical properties">
    <kinetics>
        <KM evidence="5">13 uM for 4-hydroxyphenylpyruvic acid</KM>
    </kinetics>
</comment>
<comment type="pathway">
    <text>Amino-acid degradation; L-phenylalanine degradation; acetoacetate and fumarate from L-phenylalanine: step 3/6.</text>
</comment>
<comment type="subunit">
    <text evidence="5">Homodimer.</text>
</comment>
<comment type="subcellular location">
    <subcellularLocation>
        <location evidence="4">Cytoplasm</location>
    </subcellularLocation>
    <subcellularLocation>
        <location evidence="4">Endoplasmic reticulum membrane</location>
        <topology evidence="4">Peripheral membrane protein</topology>
    </subcellularLocation>
    <subcellularLocation>
        <location evidence="4">Golgi apparatus membrane</location>
        <topology evidence="4">Peripheral membrane protein</topology>
    </subcellularLocation>
</comment>
<comment type="similarity">
    <text evidence="7">Belongs to the 4HPPD family.</text>
</comment>
<comment type="sequence caution" evidence="7">
    <conflict type="frameshift">
        <sequence resource="EMBL-CDS" id="AAA40740"/>
    </conflict>
</comment>
<feature type="initiator methionine" description="Removed" evidence="4">
    <location>
        <position position="1"/>
    </location>
</feature>
<feature type="chain" id="PRO_0000088391" description="4-hydroxyphenylpyruvate dioxygenase">
    <location>
        <begin position="2"/>
        <end position="393"/>
    </location>
</feature>
<feature type="domain" description="VOC 1" evidence="3">
    <location>
        <begin position="18"/>
        <end position="149"/>
    </location>
</feature>
<feature type="domain" description="VOC 2" evidence="3">
    <location>
        <begin position="180"/>
        <end position="338"/>
    </location>
</feature>
<feature type="binding site" evidence="5 9">
    <location>
        <position position="183"/>
    </location>
    <ligand>
        <name>Fe cation</name>
        <dbReference type="ChEBI" id="CHEBI:24875"/>
    </ligand>
</feature>
<feature type="binding site" evidence="5 9">
    <location>
        <position position="266"/>
    </location>
    <ligand>
        <name>Fe cation</name>
        <dbReference type="ChEBI" id="CHEBI:24875"/>
    </ligand>
</feature>
<feature type="binding site" evidence="5 9">
    <location>
        <position position="349"/>
    </location>
    <ligand>
        <name>Fe cation</name>
        <dbReference type="ChEBI" id="CHEBI:24875"/>
    </ligand>
</feature>
<feature type="modified residue" description="N-acetylthreonine" evidence="4">
    <location>
        <position position="2"/>
    </location>
</feature>
<feature type="modified residue" description="N6-succinyllysine" evidence="2">
    <location>
        <position position="132"/>
    </location>
</feature>
<feature type="modified residue" description="Phosphoserine" evidence="1">
    <location>
        <position position="211"/>
    </location>
</feature>
<feature type="modified residue" description="Phosphoserine" evidence="2">
    <location>
        <position position="226"/>
    </location>
</feature>
<feature type="modified residue" description="Phosphoserine" evidence="10">
    <location>
        <position position="250"/>
    </location>
</feature>
<feature type="sequence conflict" description="In Ref. 4; AAA40740." evidence="7" ref="4">
    <original>SN</original>
    <variation>WD</variation>
    <location>
        <begin position="5"/>
        <end position="6"/>
    </location>
</feature>
<feature type="strand" evidence="11">
    <location>
        <begin position="15"/>
        <end position="25"/>
    </location>
</feature>
<feature type="helix" evidence="11">
    <location>
        <begin position="29"/>
        <end position="40"/>
    </location>
</feature>
<feature type="strand" evidence="11">
    <location>
        <begin position="43"/>
        <end position="49"/>
    </location>
</feature>
<feature type="helix" evidence="11">
    <location>
        <begin position="50"/>
        <end position="52"/>
    </location>
</feature>
<feature type="strand" evidence="11">
    <location>
        <begin position="56"/>
        <end position="64"/>
    </location>
</feature>
<feature type="strand" evidence="11">
    <location>
        <begin position="67"/>
        <end position="76"/>
    </location>
</feature>
<feature type="helix" evidence="11">
    <location>
        <begin position="80"/>
        <end position="89"/>
    </location>
</feature>
<feature type="strand" evidence="11">
    <location>
        <begin position="91"/>
        <end position="101"/>
    </location>
</feature>
<feature type="helix" evidence="11">
    <location>
        <begin position="103"/>
        <end position="113"/>
    </location>
</feature>
<feature type="strand" evidence="11">
    <location>
        <begin position="117"/>
        <end position="126"/>
    </location>
</feature>
<feature type="strand" evidence="11">
    <location>
        <begin position="129"/>
        <end position="137"/>
    </location>
</feature>
<feature type="strand" evidence="11">
    <location>
        <begin position="143"/>
        <end position="151"/>
    </location>
</feature>
<feature type="strand" evidence="11">
    <location>
        <begin position="154"/>
        <end position="157"/>
    </location>
</feature>
<feature type="helix" evidence="11">
    <location>
        <begin position="170"/>
        <end position="172"/>
    </location>
</feature>
<feature type="strand" evidence="11">
    <location>
        <begin position="178"/>
        <end position="187"/>
    </location>
</feature>
<feature type="helix" evidence="11">
    <location>
        <begin position="193"/>
        <end position="204"/>
    </location>
</feature>
<feature type="strand" evidence="11">
    <location>
        <begin position="207"/>
        <end position="209"/>
    </location>
</feature>
<feature type="strand" evidence="11">
    <location>
        <begin position="225"/>
        <end position="230"/>
    </location>
</feature>
<feature type="strand" evidence="11">
    <location>
        <begin position="237"/>
        <end position="242"/>
    </location>
</feature>
<feature type="helix" evidence="11">
    <location>
        <begin position="251"/>
        <end position="259"/>
    </location>
</feature>
<feature type="strand" evidence="11">
    <location>
        <begin position="261"/>
        <end position="272"/>
    </location>
</feature>
<feature type="helix" evidence="11">
    <location>
        <begin position="274"/>
        <end position="284"/>
    </location>
</feature>
<feature type="helix" evidence="11">
    <location>
        <begin position="293"/>
        <end position="304"/>
    </location>
</feature>
<feature type="helix" evidence="11">
    <location>
        <begin position="314"/>
        <end position="320"/>
    </location>
</feature>
<feature type="strand" evidence="11">
    <location>
        <begin position="323"/>
        <end position="325"/>
    </location>
</feature>
<feature type="strand" evidence="11">
    <location>
        <begin position="331"/>
        <end position="337"/>
    </location>
</feature>
<feature type="strand" evidence="11">
    <location>
        <begin position="340"/>
        <end position="344"/>
    </location>
</feature>
<feature type="strand" evidence="11">
    <location>
        <begin position="347"/>
        <end position="355"/>
    </location>
</feature>
<feature type="helix" evidence="11">
    <location>
        <begin position="361"/>
        <end position="365"/>
    </location>
</feature>
<evidence type="ECO:0000250" key="1">
    <source>
        <dbReference type="UniProtKB" id="P32754"/>
    </source>
</evidence>
<evidence type="ECO:0000250" key="2">
    <source>
        <dbReference type="UniProtKB" id="P49429"/>
    </source>
</evidence>
<evidence type="ECO:0000255" key="3">
    <source>
        <dbReference type="PROSITE-ProRule" id="PRU01163"/>
    </source>
</evidence>
<evidence type="ECO:0000269" key="4">
    <source>
    </source>
</evidence>
<evidence type="ECO:0000269" key="5">
    <source>
    </source>
</evidence>
<evidence type="ECO:0000269" key="6">
    <source>
    </source>
</evidence>
<evidence type="ECO:0000305" key="7"/>
<evidence type="ECO:0000305" key="8">
    <source>
    </source>
</evidence>
<evidence type="ECO:0007744" key="9">
    <source>
        <dbReference type="PDB" id="1SQI"/>
    </source>
</evidence>
<evidence type="ECO:0007744" key="10">
    <source>
    </source>
</evidence>
<evidence type="ECO:0007829" key="11">
    <source>
        <dbReference type="PDB" id="1SQI"/>
    </source>
</evidence>
<accession>P32755</accession>
<accession>O88655</accession>
<keyword id="KW-0002">3D-structure</keyword>
<keyword id="KW-0007">Acetylation</keyword>
<keyword id="KW-0963">Cytoplasm</keyword>
<keyword id="KW-0223">Dioxygenase</keyword>
<keyword id="KW-0256">Endoplasmic reticulum</keyword>
<keyword id="KW-0333">Golgi apparatus</keyword>
<keyword id="KW-0408">Iron</keyword>
<keyword id="KW-0472">Membrane</keyword>
<keyword id="KW-0479">Metal-binding</keyword>
<keyword id="KW-0560">Oxidoreductase</keyword>
<keyword id="KW-0585">Phenylalanine catabolism</keyword>
<keyword id="KW-0597">Phosphoprotein</keyword>
<keyword id="KW-1185">Reference proteome</keyword>
<keyword id="KW-0677">Repeat</keyword>
<keyword id="KW-0828">Tyrosine catabolism</keyword>
<protein>
    <recommendedName>
        <fullName>4-hydroxyphenylpyruvate dioxygenase</fullName>
        <ecNumber evidence="5 6">1.13.11.27</ecNumber>
    </recommendedName>
    <alternativeName>
        <fullName>4-hydroxyphenylpyruvic acid oxidase</fullName>
        <shortName>4HPPD</shortName>
        <shortName>HPD</shortName>
        <shortName>HPPDase</shortName>
    </alternativeName>
    <alternativeName>
        <fullName>F Alloantigen</fullName>
        <shortName>F protein</shortName>
    </alternativeName>
</protein>